<comment type="function">
    <text evidence="1 2 4">Catalyzes the transfer of the phosphoribosyl group of 5-phosphorylribose-1-pyrophosphate (PRPP) to anthranilate to yield N-(5'-phosphoribosyl)-anthranilate (PRA).</text>
</comment>
<comment type="catalytic activity">
    <reaction evidence="1 2">
        <text>N-(5-phospho-beta-D-ribosyl)anthranilate + diphosphate = 5-phospho-alpha-D-ribose 1-diphosphate + anthranilate</text>
        <dbReference type="Rhea" id="RHEA:11768"/>
        <dbReference type="ChEBI" id="CHEBI:16567"/>
        <dbReference type="ChEBI" id="CHEBI:18277"/>
        <dbReference type="ChEBI" id="CHEBI:33019"/>
        <dbReference type="ChEBI" id="CHEBI:58017"/>
        <dbReference type="EC" id="2.4.2.18"/>
    </reaction>
</comment>
<comment type="cofactor">
    <cofactor>
        <name>Mg(2+)</name>
        <dbReference type="ChEBI" id="CHEBI:18420"/>
    </cofactor>
    <text>Binds 2 magnesium ions per monomer.</text>
</comment>
<comment type="biophysicochemical properties">
    <kinetics>
        <KM evidence="2 4">50 uM for magnesium (at 60 degrees Celsius and at pH 7.5)</KM>
        <KM evidence="2 4">40 nM for anthranilate (at 60 degrees Celsius and at pH 7.5)</KM>
        <KM evidence="2 4">160 uM for phosphoribosylpyrophosphate (at 60 degrees Celsius and at pH 7.5)</KM>
        <KM evidence="2 4">20 nM for anthranilate (at 25 degrees Celsius and at pH 7.5)</KM>
        <KM evidence="2 4">26 nM for anthranilate (at 40 degrees Celsius and at pH 7.5)</KM>
        <KM evidence="2 4">32 nM for anthranilate (at 50 degrees Celsius and at pH 7.5)</KM>
        <KM evidence="2 4">35 nM for anthranilate (at 60 degrees Celsius and at pH 7.5)</KM>
        <KM evidence="2 4">500 nM for anthranilate (at 87 degrees Celsius and at pH 7.5)</KM>
    </kinetics>
</comment>
<comment type="pathway">
    <text evidence="1">Amino-acid biosynthesis; L-tryptophan biosynthesis; L-tryptophan from chorismate: step 2/5.</text>
</comment>
<comment type="subunit">
    <text evidence="1 2 3 4 5">Homodimer.</text>
</comment>
<comment type="similarity">
    <text evidence="1">Belongs to the anthranilate phosphoribosyltransferase family.</text>
</comment>
<protein>
    <recommendedName>
        <fullName evidence="1">Anthranilate phosphoribosyltransferase</fullName>
        <ecNumber evidence="1">2.4.2.18</ecNumber>
    </recommendedName>
</protein>
<accession>P50384</accession>
<gene>
    <name evidence="1" type="primary">trpD</name>
    <name type="ordered locus">SSO0890</name>
</gene>
<keyword id="KW-0002">3D-structure</keyword>
<keyword id="KW-0028">Amino-acid biosynthesis</keyword>
<keyword id="KW-0057">Aromatic amino acid biosynthesis</keyword>
<keyword id="KW-0328">Glycosyltransferase</keyword>
<keyword id="KW-0460">Magnesium</keyword>
<keyword id="KW-0479">Metal-binding</keyword>
<keyword id="KW-1185">Reference proteome</keyword>
<keyword id="KW-0808">Transferase</keyword>
<keyword id="KW-0822">Tryptophan biosynthesis</keyword>
<sequence>MNINEILKKLINKSDLEINEAEELAKAIIRGEVPEILVSAILVALRMKGESKNEIVGFARAMRELAIKIDVPNAIDTAGTGGDGLGTVNVSTASAILLSLVNPVAKHGNRAVSGKSGSADVLEALGYNIIVPPERAKELVNKTNFVFLFAQYYHPAMKNVANVRKTLGIRTIFNILGPLTNPANAKYQLMGVFSKDHLDLLSKSAYELDFNKIILVYGEPGIDEVSPIGNTFMKIVSKRGIEEVKLNVTDFGISPIPIEKLIVNSAEDSAIKIVRAFLGKDEHVAEFIKINTAVALFALDRVGDFREGYEYADHLIEKSLDKLNEIISMNGDVTKLKTIVVKSSG</sequence>
<feature type="chain" id="PRO_0000154523" description="Anthranilate phosphoribosyltransferase">
    <location>
        <begin position="1"/>
        <end position="345"/>
    </location>
</feature>
<feature type="binding site">
    <location>
        <begin position="77"/>
        <end position="79"/>
    </location>
    <ligand>
        <name>5-phospho-alpha-D-ribose 1-diphosphate</name>
        <dbReference type="ChEBI" id="CHEBI:58017"/>
    </ligand>
</feature>
<feature type="binding site">
    <location>
        <position position="79"/>
    </location>
    <ligand>
        <name>anthranilate</name>
        <dbReference type="ChEBI" id="CHEBI:16567"/>
        <label>1</label>
    </ligand>
</feature>
<feature type="binding site">
    <location>
        <begin position="82"/>
        <end position="83"/>
    </location>
    <ligand>
        <name>5-phospho-alpha-D-ribose 1-diphosphate</name>
        <dbReference type="ChEBI" id="CHEBI:58017"/>
    </ligand>
</feature>
<feature type="binding site" evidence="1 4 5">
    <location>
        <position position="87"/>
    </location>
    <ligand>
        <name>5-phospho-alpha-D-ribose 1-diphosphate</name>
        <dbReference type="ChEBI" id="CHEBI:58017"/>
    </ligand>
</feature>
<feature type="binding site">
    <location>
        <begin position="89"/>
        <end position="92"/>
    </location>
    <ligand>
        <name>5-phospho-alpha-D-ribose 1-diphosphate</name>
        <dbReference type="ChEBI" id="CHEBI:58017"/>
    </ligand>
</feature>
<feature type="binding site">
    <location>
        <position position="91"/>
    </location>
    <ligand>
        <name>Mg(2+)</name>
        <dbReference type="ChEBI" id="CHEBI:18420"/>
        <label>1</label>
    </ligand>
</feature>
<feature type="binding site">
    <location>
        <begin position="106"/>
        <end position="114"/>
    </location>
    <ligand>
        <name>5-phospho-alpha-D-ribose 1-diphosphate</name>
        <dbReference type="ChEBI" id="CHEBI:58017"/>
    </ligand>
</feature>
<feature type="binding site">
    <location>
        <position position="109"/>
    </location>
    <ligand>
        <name>anthranilate</name>
        <dbReference type="ChEBI" id="CHEBI:16567"/>
        <label>1</label>
    </ligand>
</feature>
<feature type="binding site" evidence="1 4 5">
    <location>
        <position position="118"/>
    </location>
    <ligand>
        <name>5-phospho-alpha-D-ribose 1-diphosphate</name>
        <dbReference type="ChEBI" id="CHEBI:58017"/>
    </ligand>
</feature>
<feature type="binding site">
    <location>
        <position position="164"/>
    </location>
    <ligand>
        <name>anthranilate</name>
        <dbReference type="ChEBI" id="CHEBI:16567"/>
        <label>2</label>
    </ligand>
</feature>
<feature type="binding site">
    <location>
        <position position="223"/>
    </location>
    <ligand>
        <name>Mg(2+)</name>
        <dbReference type="ChEBI" id="CHEBI:18420"/>
        <label>2</label>
    </ligand>
</feature>
<feature type="binding site">
    <location>
        <position position="224"/>
    </location>
    <ligand>
        <name>Mg(2+)</name>
        <dbReference type="ChEBI" id="CHEBI:18420"/>
        <label>1</label>
    </ligand>
</feature>
<feature type="binding site">
    <location>
        <position position="224"/>
    </location>
    <ligand>
        <name>Mg(2+)</name>
        <dbReference type="ChEBI" id="CHEBI:18420"/>
        <label>2</label>
    </ligand>
</feature>
<feature type="mutagenesis site" description="Affinity for phosphoribosylpyrophosphate is similar to that of the wild-type enzyme and catalytic efficiency dedreases only 10-fold." evidence="4">
    <original>K</original>
    <variation>Q</variation>
    <location>
        <position position="106"/>
    </location>
</feature>
<feature type="mutagenesis site" description="Limited effect on either affinity for anthranilate and catalytic efficiency. 300-fold decrease of the affinity for anthranilate, whereas catalytic efficiency remains nearly unchanged; when associated with A-178." evidence="4">
    <original>H</original>
    <variation>A</variation>
    <location>
        <position position="107"/>
    </location>
</feature>
<feature type="mutagenesis site" description="Limited effect on either affinity for anthranilate and catalytic efficiency." evidence="4">
    <original>H</original>
    <variation>A</variation>
    <location>
        <position position="154"/>
    </location>
</feature>
<feature type="mutagenesis site" description="Strong decrease of the affinity for anthranilate, although only a moderate 7-fold decrease in catalytic efficiency." evidence="4">
    <original>R</original>
    <variation>A</variation>
    <location>
        <position position="164"/>
    </location>
</feature>
<feature type="mutagenesis site" description="300-fold decrease of the affinity for anthranilate, whereas catalytic efficiency remains nearly unchanged; when associated with A-107.">
    <original>P</original>
    <variation>A</variation>
    <location>
        <position position="178"/>
    </location>
</feature>
<feature type="mutagenesis site" description="Affinity for phosphoribosylpyrophosphate is similar to that of the wild-type enzyme and catalytic efficiency is unchanged." evidence="4">
    <original>D</original>
    <variation>N</variation>
    <location>
        <position position="223"/>
    </location>
</feature>
<feature type="mutagenesis site" description="Affinity for phosphoribosylpyrophosphate is similar to that of the wild-type enzyme and catalytic efficiency is unchanged." evidence="4">
    <original>E</original>
    <variation>Q</variation>
    <location>
        <position position="224"/>
    </location>
</feature>
<feature type="helix" evidence="6">
    <location>
        <begin position="3"/>
        <end position="11"/>
    </location>
</feature>
<feature type="helix" evidence="6">
    <location>
        <begin position="18"/>
        <end position="29"/>
    </location>
</feature>
<feature type="helix" evidence="6">
    <location>
        <begin position="35"/>
        <end position="48"/>
    </location>
</feature>
<feature type="helix" evidence="6">
    <location>
        <begin position="52"/>
        <end position="65"/>
    </location>
</feature>
<feature type="strand" evidence="8">
    <location>
        <begin position="75"/>
        <end position="79"/>
    </location>
</feature>
<feature type="helix" evidence="6">
    <location>
        <begin position="90"/>
        <end position="98"/>
    </location>
</feature>
<feature type="turn" evidence="6">
    <location>
        <begin position="99"/>
        <end position="101"/>
    </location>
</feature>
<feature type="strand" evidence="6">
    <location>
        <begin position="104"/>
        <end position="108"/>
    </location>
</feature>
<feature type="strand" evidence="6">
    <location>
        <begin position="112"/>
        <end position="115"/>
    </location>
</feature>
<feature type="helix" evidence="6">
    <location>
        <begin position="118"/>
        <end position="125"/>
    </location>
</feature>
<feature type="helix" evidence="6">
    <location>
        <begin position="133"/>
        <end position="143"/>
    </location>
</feature>
<feature type="strand" evidence="6">
    <location>
        <begin position="144"/>
        <end position="149"/>
    </location>
</feature>
<feature type="helix" evidence="6">
    <location>
        <begin position="150"/>
        <end position="153"/>
    </location>
</feature>
<feature type="helix" evidence="6">
    <location>
        <begin position="155"/>
        <end position="159"/>
    </location>
</feature>
<feature type="helix" evidence="6">
    <location>
        <begin position="161"/>
        <end position="167"/>
    </location>
</feature>
<feature type="helix" evidence="6">
    <location>
        <begin position="172"/>
        <end position="175"/>
    </location>
</feature>
<feature type="helix" evidence="6">
    <location>
        <begin position="177"/>
        <end position="179"/>
    </location>
</feature>
<feature type="strand" evidence="6">
    <location>
        <begin position="186"/>
        <end position="191"/>
    </location>
</feature>
<feature type="helix" evidence="6">
    <location>
        <begin position="195"/>
        <end position="205"/>
    </location>
</feature>
<feature type="turn" evidence="7">
    <location>
        <begin position="207"/>
        <end position="209"/>
    </location>
</feature>
<feature type="strand" evidence="6">
    <location>
        <begin position="211"/>
        <end position="218"/>
    </location>
</feature>
<feature type="turn" evidence="6">
    <location>
        <begin position="219"/>
        <end position="221"/>
    </location>
</feature>
<feature type="strand" evidence="6">
    <location>
        <begin position="222"/>
        <end position="224"/>
    </location>
</feature>
<feature type="strand" evidence="6">
    <location>
        <begin position="227"/>
        <end position="237"/>
    </location>
</feature>
<feature type="strand" evidence="6">
    <location>
        <begin position="240"/>
        <end position="247"/>
    </location>
</feature>
<feature type="helix" evidence="6">
    <location>
        <begin position="248"/>
        <end position="251"/>
    </location>
</feature>
<feature type="helix" evidence="6">
    <location>
        <begin position="258"/>
        <end position="260"/>
    </location>
</feature>
<feature type="helix" evidence="6">
    <location>
        <begin position="266"/>
        <end position="277"/>
    </location>
</feature>
<feature type="helix" evidence="6">
    <location>
        <begin position="282"/>
        <end position="298"/>
    </location>
</feature>
<feature type="strand" evidence="6">
    <location>
        <begin position="301"/>
        <end position="304"/>
    </location>
</feature>
<feature type="helix" evidence="6">
    <location>
        <begin position="305"/>
        <end position="316"/>
    </location>
</feature>
<feature type="helix" evidence="6">
    <location>
        <begin position="319"/>
        <end position="329"/>
    </location>
</feature>
<feature type="helix" evidence="6">
    <location>
        <begin position="333"/>
        <end position="340"/>
    </location>
</feature>
<proteinExistence type="evidence at protein level"/>
<evidence type="ECO:0000255" key="1">
    <source>
        <dbReference type="HAMAP-Rule" id="MF_00211"/>
    </source>
</evidence>
<evidence type="ECO:0000269" key="2">
    <source>
    </source>
</evidence>
<evidence type="ECO:0000269" key="3">
    <source>
    </source>
</evidence>
<evidence type="ECO:0000269" key="4">
    <source>
    </source>
</evidence>
<evidence type="ECO:0000269" key="5">
    <source>
    </source>
</evidence>
<evidence type="ECO:0007829" key="6">
    <source>
        <dbReference type="PDB" id="1O17"/>
    </source>
</evidence>
<evidence type="ECO:0007829" key="7">
    <source>
        <dbReference type="PDB" id="1ZYK"/>
    </source>
</evidence>
<evidence type="ECO:0007829" key="8">
    <source>
        <dbReference type="PDB" id="3GBR"/>
    </source>
</evidence>
<reference key="1">
    <citation type="submission" date="1995-07" db="EMBL/GenBank/DDBJ databases">
        <title>The tryptophan operon in Sulfolobus solfataricus.</title>
        <authorList>
            <person name="Tutino M.L."/>
            <person name="Cubellis M."/>
            <person name="Sannia G."/>
            <person name="Marino G."/>
        </authorList>
    </citation>
    <scope>NUCLEOTIDE SEQUENCE [GENOMIC DNA]</scope>
    <source>
        <strain>DSM 5833 / MT-4</strain>
    </source>
</reference>
<reference key="2">
    <citation type="journal article" date="2001" name="Proc. Natl. Acad. Sci. U.S.A.">
        <title>The complete genome of the crenarchaeon Sulfolobus solfataricus P2.</title>
        <authorList>
            <person name="She Q."/>
            <person name="Singh R.K."/>
            <person name="Confalonieri F."/>
            <person name="Zivanovic Y."/>
            <person name="Allard G."/>
            <person name="Awayez M.J."/>
            <person name="Chan-Weiher C.C.-Y."/>
            <person name="Clausen I.G."/>
            <person name="Curtis B.A."/>
            <person name="De Moors A."/>
            <person name="Erauso G."/>
            <person name="Fletcher C."/>
            <person name="Gordon P.M.K."/>
            <person name="Heikamp-de Jong I."/>
            <person name="Jeffries A.C."/>
            <person name="Kozera C.J."/>
            <person name="Medina N."/>
            <person name="Peng X."/>
            <person name="Thi-Ngoc H.P."/>
            <person name="Redder P."/>
            <person name="Schenk M.E."/>
            <person name="Theriault C."/>
            <person name="Tolstrup N."/>
            <person name="Charlebois R.L."/>
            <person name="Doolittle W.F."/>
            <person name="Duguet M."/>
            <person name="Gaasterland T."/>
            <person name="Garrett R.A."/>
            <person name="Ragan M.A."/>
            <person name="Sensen C.W."/>
            <person name="Van der Oost J."/>
        </authorList>
    </citation>
    <scope>NUCLEOTIDE SEQUENCE [LARGE SCALE GENOMIC DNA]</scope>
    <source>
        <strain>ATCC 35092 / DSM 1617 / JCM 11322 / P2</strain>
    </source>
</reference>
<reference key="3">
    <citation type="journal article" date="2001" name="Eur. J. Biochem.">
        <title>Purification, characterization and crystallization of thermostable anthranilate phosphoribosyltransferase from Sulfolobus solfataricus.</title>
        <authorList>
            <person name="Ivens A."/>
            <person name="Mayans O."/>
            <person name="Szadkowski H."/>
            <person name="Wilmanns M."/>
            <person name="Kirschner K."/>
        </authorList>
    </citation>
    <scope>FUNCTION</scope>
    <scope>CATALYTIC ACTIVITY</scope>
    <scope>BIOPHYSICOCHEMICAL PROPERTIES</scope>
    <scope>CRYSTALLIZATION</scope>
    <scope>SUBUNIT</scope>
</reference>
<reference key="4">
    <citation type="journal article" date="2002" name="EMBO J.">
        <title>Structural analysis of two enzymes catalysing reverse metabolic reactions implies common ancestry.</title>
        <authorList>
            <person name="Mayans O."/>
            <person name="Ivens A."/>
            <person name="Nissen L.J."/>
            <person name="Kirschner K."/>
            <person name="Wilmanns M."/>
        </authorList>
    </citation>
    <scope>X-RAY CRYSTALLOGRAPHY (2.7 ANGSTROMS) IN COMPLEX WITH MAGNESIUM IONS</scope>
    <scope>SUBUNIT</scope>
</reference>
<reference key="5">
    <citation type="journal article" date="2006" name="J. Biol. Chem.">
        <title>Structural and mutational analysis of substrate complexation by anthranilate phosphoribosyltransferase from Sulfolobus solfataricus.</title>
        <authorList>
            <person name="Marino M."/>
            <person name="Deuss M."/>
            <person name="Svergun D.I."/>
            <person name="Konarev P.V."/>
            <person name="Sterner R."/>
            <person name="Mayans O."/>
        </authorList>
    </citation>
    <scope>X-RAY CRYSTALLOGRAPHY (2.56 ANGSTROMS) IN COMPLEX WITH PHOSPHORIBOSYLPYROPHOSPHATE</scope>
    <scope>ANTHRANILATE AND MAGNESIUM IONS</scope>
    <scope>FUNCTION</scope>
    <scope>MUTAGENESIS OF LYS-106; HIS-107; HIS-154; ARG-164; ASP-223 AND GLU-224</scope>
    <scope>BIOPHYSICOCHEMICAL PROPERTIES</scope>
    <scope>SUBUNIT</scope>
</reference>
<reference key="6">
    <citation type="journal article" date="2009" name="Biochemistry">
        <title>Activation of anthranilate phosphoribosyltransferase from Sulfolobus solfataricus by removal of magnesium inhibition and acceleration of product release.</title>
        <authorList>
            <person name="Schlee S."/>
            <person name="Deuss M."/>
            <person name="Bruning M."/>
            <person name="Ivens A."/>
            <person name="Schwab T."/>
            <person name="Hellmann N."/>
            <person name="Mayans O."/>
            <person name="Sterner R."/>
        </authorList>
    </citation>
    <scope>X-RAY CRYSTALLOGRAPHY (2.25 ANGSTROMS) IN COMPLEX WITH PHOSPHORIBOSYLPYROPHOSPHATE AND MAGNESIUM IONS</scope>
    <scope>SUBUNIT</scope>
</reference>
<dbReference type="EC" id="2.4.2.18" evidence="1"/>
<dbReference type="EMBL" id="Z50014">
    <property type="protein sequence ID" value="CAA90309.1"/>
    <property type="molecule type" value="Genomic_DNA"/>
</dbReference>
<dbReference type="EMBL" id="AE006641">
    <property type="protein sequence ID" value="AAK41173.1"/>
    <property type="molecule type" value="Genomic_DNA"/>
</dbReference>
<dbReference type="PIR" id="F90239">
    <property type="entry name" value="F90239"/>
</dbReference>
<dbReference type="RefSeq" id="WP_009992305.1">
    <property type="nucleotide sequence ID" value="NC_002754.1"/>
</dbReference>
<dbReference type="PDB" id="1GXB">
    <property type="method" value="X-ray"/>
    <property type="resolution" value="2.70 A"/>
    <property type="chains" value="A/B/C/D=1-345"/>
</dbReference>
<dbReference type="PDB" id="1O17">
    <property type="method" value="X-ray"/>
    <property type="resolution" value="2.05 A"/>
    <property type="chains" value="A/B/C/D=1-345"/>
</dbReference>
<dbReference type="PDB" id="1ZXY">
    <property type="method" value="X-ray"/>
    <property type="resolution" value="2.56 A"/>
    <property type="chains" value="A/B/C/D=1-345"/>
</dbReference>
<dbReference type="PDB" id="1ZYK">
    <property type="method" value="X-ray"/>
    <property type="resolution" value="2.40 A"/>
    <property type="chains" value="A/B/C/D=1-345"/>
</dbReference>
<dbReference type="PDB" id="2GVQ">
    <property type="method" value="X-ray"/>
    <property type="resolution" value="2.43 A"/>
    <property type="chains" value="A/B/C/D=1-345"/>
</dbReference>
<dbReference type="PDB" id="3GBR">
    <property type="method" value="X-ray"/>
    <property type="resolution" value="2.25 A"/>
    <property type="chains" value="A/B=1-345"/>
</dbReference>
<dbReference type="PDBsum" id="1GXB"/>
<dbReference type="PDBsum" id="1O17"/>
<dbReference type="PDBsum" id="1ZXY"/>
<dbReference type="PDBsum" id="1ZYK"/>
<dbReference type="PDBsum" id="2GVQ"/>
<dbReference type="PDBsum" id="3GBR"/>
<dbReference type="SMR" id="P50384"/>
<dbReference type="FunCoup" id="P50384">
    <property type="interactions" value="134"/>
</dbReference>
<dbReference type="STRING" id="273057.SSO0890"/>
<dbReference type="PaxDb" id="273057-SSO0890"/>
<dbReference type="EnsemblBacteria" id="AAK41173">
    <property type="protein sequence ID" value="AAK41173"/>
    <property type="gene ID" value="SSO0890"/>
</dbReference>
<dbReference type="GeneID" id="44129821"/>
<dbReference type="KEGG" id="sso:SSO0890"/>
<dbReference type="PATRIC" id="fig|273057.12.peg.894"/>
<dbReference type="eggNOG" id="arCOG02012">
    <property type="taxonomic scope" value="Archaea"/>
</dbReference>
<dbReference type="HOGENOM" id="CLU_034315_2_1_2"/>
<dbReference type="InParanoid" id="P50384"/>
<dbReference type="PhylomeDB" id="P50384"/>
<dbReference type="BRENDA" id="2.4.2.18">
    <property type="organism ID" value="6163"/>
</dbReference>
<dbReference type="SABIO-RK" id="P50384"/>
<dbReference type="UniPathway" id="UPA00035">
    <property type="reaction ID" value="UER00041"/>
</dbReference>
<dbReference type="EvolutionaryTrace" id="P50384"/>
<dbReference type="Proteomes" id="UP000001974">
    <property type="component" value="Chromosome"/>
</dbReference>
<dbReference type="GO" id="GO:0005829">
    <property type="term" value="C:cytosol"/>
    <property type="evidence" value="ECO:0000318"/>
    <property type="project" value="GO_Central"/>
</dbReference>
<dbReference type="GO" id="GO:0004048">
    <property type="term" value="F:anthranilate phosphoribosyltransferase activity"/>
    <property type="evidence" value="ECO:0007669"/>
    <property type="project" value="UniProtKB-UniRule"/>
</dbReference>
<dbReference type="GO" id="GO:0000287">
    <property type="term" value="F:magnesium ion binding"/>
    <property type="evidence" value="ECO:0007669"/>
    <property type="project" value="UniProtKB-UniRule"/>
</dbReference>
<dbReference type="GO" id="GO:0000162">
    <property type="term" value="P:L-tryptophan biosynthetic process"/>
    <property type="evidence" value="ECO:0000318"/>
    <property type="project" value="GO_Central"/>
</dbReference>
<dbReference type="Gene3D" id="3.40.1030.10">
    <property type="entry name" value="Nucleoside phosphorylase/phosphoribosyltransferase catalytic domain"/>
    <property type="match status" value="1"/>
</dbReference>
<dbReference type="Gene3D" id="1.20.970.10">
    <property type="entry name" value="Transferase, Pyrimidine Nucleoside Phosphorylase, Chain C"/>
    <property type="match status" value="1"/>
</dbReference>
<dbReference type="HAMAP" id="MF_00211">
    <property type="entry name" value="TrpD"/>
    <property type="match status" value="1"/>
</dbReference>
<dbReference type="InterPro" id="IPR005940">
    <property type="entry name" value="Anthranilate_Pribosyl_Tfrase"/>
</dbReference>
<dbReference type="InterPro" id="IPR000312">
    <property type="entry name" value="Glycosyl_Trfase_fam3"/>
</dbReference>
<dbReference type="InterPro" id="IPR017459">
    <property type="entry name" value="Glycosyl_Trfase_fam3_N_dom"/>
</dbReference>
<dbReference type="InterPro" id="IPR036320">
    <property type="entry name" value="Glycosyl_Trfase_fam3_N_dom_sf"/>
</dbReference>
<dbReference type="InterPro" id="IPR035902">
    <property type="entry name" value="Nuc_phospho_transferase"/>
</dbReference>
<dbReference type="NCBIfam" id="TIGR01245">
    <property type="entry name" value="trpD"/>
    <property type="match status" value="1"/>
</dbReference>
<dbReference type="PANTHER" id="PTHR43285">
    <property type="entry name" value="ANTHRANILATE PHOSPHORIBOSYLTRANSFERASE"/>
    <property type="match status" value="1"/>
</dbReference>
<dbReference type="PANTHER" id="PTHR43285:SF2">
    <property type="entry name" value="ANTHRANILATE PHOSPHORIBOSYLTRANSFERASE"/>
    <property type="match status" value="1"/>
</dbReference>
<dbReference type="Pfam" id="PF02885">
    <property type="entry name" value="Glycos_trans_3N"/>
    <property type="match status" value="1"/>
</dbReference>
<dbReference type="Pfam" id="PF00591">
    <property type="entry name" value="Glycos_transf_3"/>
    <property type="match status" value="1"/>
</dbReference>
<dbReference type="SUPFAM" id="SSF52418">
    <property type="entry name" value="Nucleoside phosphorylase/phosphoribosyltransferase catalytic domain"/>
    <property type="match status" value="1"/>
</dbReference>
<dbReference type="SUPFAM" id="SSF47648">
    <property type="entry name" value="Nucleoside phosphorylase/phosphoribosyltransferase N-terminal domain"/>
    <property type="match status" value="1"/>
</dbReference>
<name>TRPD_SACS2</name>
<organism>
    <name type="scientific">Saccharolobus solfataricus (strain ATCC 35092 / DSM 1617 / JCM 11322 / P2)</name>
    <name type="common">Sulfolobus solfataricus</name>
    <dbReference type="NCBI Taxonomy" id="273057"/>
    <lineage>
        <taxon>Archaea</taxon>
        <taxon>Thermoproteota</taxon>
        <taxon>Thermoprotei</taxon>
        <taxon>Sulfolobales</taxon>
        <taxon>Sulfolobaceae</taxon>
        <taxon>Saccharolobus</taxon>
    </lineage>
</organism>